<organism>
    <name type="scientific">Salmonella newport (strain SL254)</name>
    <dbReference type="NCBI Taxonomy" id="423368"/>
    <lineage>
        <taxon>Bacteria</taxon>
        <taxon>Pseudomonadati</taxon>
        <taxon>Pseudomonadota</taxon>
        <taxon>Gammaproteobacteria</taxon>
        <taxon>Enterobacterales</taxon>
        <taxon>Enterobacteriaceae</taxon>
        <taxon>Salmonella</taxon>
    </lineage>
</organism>
<protein>
    <recommendedName>
        <fullName evidence="1">Cytoplasmic trehalase</fullName>
        <ecNumber evidence="1">3.2.1.28</ecNumber>
    </recommendedName>
    <alternativeName>
        <fullName evidence="1">Alpha,alpha-trehalase</fullName>
    </alternativeName>
    <alternativeName>
        <fullName evidence="1">Alpha,alpha-trehalose glucohydrolase</fullName>
    </alternativeName>
</protein>
<dbReference type="EC" id="3.2.1.28" evidence="1"/>
<dbReference type="EMBL" id="CP001113">
    <property type="protein sequence ID" value="ACF64540.1"/>
    <property type="molecule type" value="Genomic_DNA"/>
</dbReference>
<dbReference type="RefSeq" id="WP_000934257.1">
    <property type="nucleotide sequence ID" value="NZ_CCMR01000004.1"/>
</dbReference>
<dbReference type="SMR" id="B4SWF1"/>
<dbReference type="CAZy" id="GH37">
    <property type="family name" value="Glycoside Hydrolase Family 37"/>
</dbReference>
<dbReference type="KEGG" id="see:SNSL254_A3875"/>
<dbReference type="HOGENOM" id="CLU_006451_3_1_6"/>
<dbReference type="UniPathway" id="UPA00300">
    <property type="reaction ID" value="UER00535"/>
</dbReference>
<dbReference type="Proteomes" id="UP000008824">
    <property type="component" value="Chromosome"/>
</dbReference>
<dbReference type="GO" id="GO:0005737">
    <property type="term" value="C:cytoplasm"/>
    <property type="evidence" value="ECO:0007669"/>
    <property type="project" value="UniProtKB-SubCell"/>
</dbReference>
<dbReference type="GO" id="GO:0004555">
    <property type="term" value="F:alpha,alpha-trehalase activity"/>
    <property type="evidence" value="ECO:0007669"/>
    <property type="project" value="UniProtKB-UniRule"/>
</dbReference>
<dbReference type="GO" id="GO:0071474">
    <property type="term" value="P:cellular hyperosmotic response"/>
    <property type="evidence" value="ECO:0007669"/>
    <property type="project" value="InterPro"/>
</dbReference>
<dbReference type="GO" id="GO:0005993">
    <property type="term" value="P:trehalose catabolic process"/>
    <property type="evidence" value="ECO:0007669"/>
    <property type="project" value="UniProtKB-UniRule"/>
</dbReference>
<dbReference type="FunFam" id="1.50.10.10:FF:000003">
    <property type="entry name" value="Cytoplasmic trehalase"/>
    <property type="match status" value="1"/>
</dbReference>
<dbReference type="Gene3D" id="1.50.10.10">
    <property type="match status" value="1"/>
</dbReference>
<dbReference type="HAMAP" id="MF_01059">
    <property type="entry name" value="Cyt_trehalase"/>
    <property type="match status" value="1"/>
</dbReference>
<dbReference type="InterPro" id="IPR008928">
    <property type="entry name" value="6-hairpin_glycosidase_sf"/>
</dbReference>
<dbReference type="InterPro" id="IPR012341">
    <property type="entry name" value="6hp_glycosidase-like_sf"/>
</dbReference>
<dbReference type="InterPro" id="IPR023715">
    <property type="entry name" value="Cyt_trehalase"/>
</dbReference>
<dbReference type="InterPro" id="IPR001661">
    <property type="entry name" value="Glyco_hydro_37"/>
</dbReference>
<dbReference type="InterPro" id="IPR018232">
    <property type="entry name" value="Glyco_hydro_37_CS"/>
</dbReference>
<dbReference type="NCBIfam" id="NF009773">
    <property type="entry name" value="PRK13270.1"/>
    <property type="match status" value="1"/>
</dbReference>
<dbReference type="NCBIfam" id="NF009774">
    <property type="entry name" value="PRK13271.1"/>
    <property type="match status" value="1"/>
</dbReference>
<dbReference type="PANTHER" id="PTHR23403:SF8">
    <property type="entry name" value="CYTOPLASMIC TREHALASE"/>
    <property type="match status" value="1"/>
</dbReference>
<dbReference type="PANTHER" id="PTHR23403">
    <property type="entry name" value="TREHALASE"/>
    <property type="match status" value="1"/>
</dbReference>
<dbReference type="Pfam" id="PF01204">
    <property type="entry name" value="Trehalase"/>
    <property type="match status" value="1"/>
</dbReference>
<dbReference type="PRINTS" id="PR00744">
    <property type="entry name" value="GLHYDRLASE37"/>
</dbReference>
<dbReference type="SUPFAM" id="SSF48208">
    <property type="entry name" value="Six-hairpin glycosidases"/>
    <property type="match status" value="1"/>
</dbReference>
<dbReference type="PROSITE" id="PS00927">
    <property type="entry name" value="TREHALASE_1"/>
    <property type="match status" value="1"/>
</dbReference>
<dbReference type="PROSITE" id="PS00928">
    <property type="entry name" value="TREHALASE_2"/>
    <property type="match status" value="1"/>
</dbReference>
<reference key="1">
    <citation type="journal article" date="2011" name="J. Bacteriol.">
        <title>Comparative genomics of 28 Salmonella enterica isolates: evidence for CRISPR-mediated adaptive sublineage evolution.</title>
        <authorList>
            <person name="Fricke W.F."/>
            <person name="Mammel M.K."/>
            <person name="McDermott P.F."/>
            <person name="Tartera C."/>
            <person name="White D.G."/>
            <person name="Leclerc J.E."/>
            <person name="Ravel J."/>
            <person name="Cebula T.A."/>
        </authorList>
    </citation>
    <scope>NUCLEOTIDE SEQUENCE [LARGE SCALE GENOMIC DNA]</scope>
    <source>
        <strain>SL254</strain>
    </source>
</reference>
<evidence type="ECO:0000255" key="1">
    <source>
        <dbReference type="HAMAP-Rule" id="MF_01059"/>
    </source>
</evidence>
<proteinExistence type="inferred from homology"/>
<name>TREF_SALNS</name>
<sequence>MLNQKLNPTPSEDLTIDVDLLYETDPCELKLDEMIEAEPEPEMIEGLPASDALTPADRYLELFEHVQSTKLFPDSKTFPDCAPKMDPLDILIRYRKVRRHRDFDLRRFVENHFWLPETLSSEYVSNPENSLKEHIDQLWPILTREPQDHIPWSSLLALPQSYIVPGGRFSETYYWDSYFTMLGLAESGREDLLKCMADNFAWMIENYGHIPNGNRTYYLSRSQPPVFALMVELFEEDGVRGARRYLDHLKMEYAFWMDGAESLALNQAYRHVVRMPDGSLLNRYWDDRDTPRDESWLEDVETAKHSGRPPNEVYRDLRAGAASGWDYSSRWLRDAGRLASIRTTQFIPIDLNAFLYKLESAIANISALKGERDTEALFRQKASDRRAAVNHYLWDDENGCYRDYDWRREEMALFSAASIVPLYVGMANHEQADRLANVVRSRLLTPGGIMATEYETGEQWDKPNGWAPLQWMAIQGFKRYGDDMLGDEIAHNWLKTVNHFYQEHHKLIEKYHISGGTPREGGGGEYPLQDGFGWTNGVVRRLIGLYGEP</sequence>
<comment type="function">
    <text evidence="1">Hydrolyzes trehalose to glucose. Could be involved, in cells returning to low osmolarity conditions, in the utilization of the accumulated cytoplasmic trehalose, which was synthesized in response to high osmolarity.</text>
</comment>
<comment type="catalytic activity">
    <reaction evidence="1">
        <text>alpha,alpha-trehalose + H2O = alpha-D-glucose + beta-D-glucose</text>
        <dbReference type="Rhea" id="RHEA:32675"/>
        <dbReference type="ChEBI" id="CHEBI:15377"/>
        <dbReference type="ChEBI" id="CHEBI:15903"/>
        <dbReference type="ChEBI" id="CHEBI:16551"/>
        <dbReference type="ChEBI" id="CHEBI:17925"/>
        <dbReference type="EC" id="3.2.1.28"/>
    </reaction>
</comment>
<comment type="pathway">
    <text evidence="1">Glycan degradation; trehalose degradation; D-glucose from alpha,alpha-trehalose: step 1/1.</text>
</comment>
<comment type="subunit">
    <text evidence="1">Monomer.</text>
</comment>
<comment type="subcellular location">
    <subcellularLocation>
        <location evidence="1">Cytoplasm</location>
    </subcellularLocation>
</comment>
<comment type="similarity">
    <text evidence="1">Belongs to the glycosyl hydrolase 37 family.</text>
</comment>
<accession>B4SWF1</accession>
<keyword id="KW-0963">Cytoplasm</keyword>
<keyword id="KW-0326">Glycosidase</keyword>
<keyword id="KW-0378">Hydrolase</keyword>
<gene>
    <name evidence="1" type="primary">treF</name>
    <name type="ordered locus">SNSL254_A3875</name>
</gene>
<feature type="chain" id="PRO_1000136413" description="Cytoplasmic trehalase">
    <location>
        <begin position="1"/>
        <end position="549"/>
    </location>
</feature>
<feature type="active site" description="Proton donor/acceptor" evidence="1">
    <location>
        <position position="326"/>
    </location>
</feature>
<feature type="active site" description="Proton donor/acceptor" evidence="1">
    <location>
        <position position="509"/>
    </location>
</feature>
<feature type="binding site" evidence="1">
    <location>
        <position position="168"/>
    </location>
    <ligand>
        <name>substrate</name>
    </ligand>
</feature>
<feature type="binding site" evidence="1">
    <location>
        <begin position="175"/>
        <end position="176"/>
    </location>
    <ligand>
        <name>substrate</name>
    </ligand>
</feature>
<feature type="binding site" evidence="1">
    <location>
        <position position="212"/>
    </location>
    <ligand>
        <name>substrate</name>
    </ligand>
</feature>
<feature type="binding site" evidence="1">
    <location>
        <begin position="221"/>
        <end position="223"/>
    </location>
    <ligand>
        <name>substrate</name>
    </ligand>
</feature>
<feature type="binding site" evidence="1">
    <location>
        <begin position="292"/>
        <end position="294"/>
    </location>
    <ligand>
        <name>substrate</name>
    </ligand>
</feature>
<feature type="binding site" evidence="1">
    <location>
        <position position="324"/>
    </location>
    <ligand>
        <name>substrate</name>
    </ligand>
</feature>
<feature type="binding site" evidence="1">
    <location>
        <position position="525"/>
    </location>
    <ligand>
        <name>substrate</name>
    </ligand>
</feature>